<sequence>MATGKIVQVIGAVVDAEFPQDSVPKVYDALEVMNGKEKLVLEVQQQLGGGIVRCIAMGTSDGLSRGLKVEDLGHPIEVPVGKATLGRIMNVLGTPIDMKGEIETEERWSIHREAPTYEELSNSQELLETGIKVMDLICPFAKGGKVGLFGGAGVGKTVNMMELIRNIAIEHSGYSVFAGVGERTREGNDFYHEMTDSNVLDKVSLVYGQMNEPPGNRLRVALTGLTMAEKFRDEGRDVLLFVDNIYRYTLAGTEVSALLGRMPSAVGYQPTLAEEMGVLQERITSTKTGSITSVQAVYVPADDLTDPSPATTFAHLDATVVLSRQIASLGIYPAVDPLDSTSRQLDPLVVGQEHYDVARGVQSILQRYQELKDIIAILGMDELSEEDKLVVARARKIQRFLSQPFFVAEVFTGSPGKFVSLKDTIRGFKGILNGDYDHLPEQAFYMVGTIEEAVEKAKKL</sequence>
<evidence type="ECO:0000255" key="1">
    <source>
        <dbReference type="HAMAP-Rule" id="MF_01347"/>
    </source>
</evidence>
<reference key="1">
    <citation type="journal article" date="2008" name="J. Bacteriol.">
        <title>Complete genome sequence of uropathogenic Proteus mirabilis, a master of both adherence and motility.</title>
        <authorList>
            <person name="Pearson M.M."/>
            <person name="Sebaihia M."/>
            <person name="Churcher C."/>
            <person name="Quail M.A."/>
            <person name="Seshasayee A.S."/>
            <person name="Luscombe N.M."/>
            <person name="Abdellah Z."/>
            <person name="Arrosmith C."/>
            <person name="Atkin B."/>
            <person name="Chillingworth T."/>
            <person name="Hauser H."/>
            <person name="Jagels K."/>
            <person name="Moule S."/>
            <person name="Mungall K."/>
            <person name="Norbertczak H."/>
            <person name="Rabbinowitsch E."/>
            <person name="Walker D."/>
            <person name="Whithead S."/>
            <person name="Thomson N.R."/>
            <person name="Rather P.N."/>
            <person name="Parkhill J."/>
            <person name="Mobley H.L.T."/>
        </authorList>
    </citation>
    <scope>NUCLEOTIDE SEQUENCE [LARGE SCALE GENOMIC DNA]</scope>
    <source>
        <strain>HI4320</strain>
    </source>
</reference>
<organism>
    <name type="scientific">Proteus mirabilis (strain HI4320)</name>
    <dbReference type="NCBI Taxonomy" id="529507"/>
    <lineage>
        <taxon>Bacteria</taxon>
        <taxon>Pseudomonadati</taxon>
        <taxon>Pseudomonadota</taxon>
        <taxon>Gammaproteobacteria</taxon>
        <taxon>Enterobacterales</taxon>
        <taxon>Morganellaceae</taxon>
        <taxon>Proteus</taxon>
    </lineage>
</organism>
<proteinExistence type="inferred from homology"/>
<dbReference type="EC" id="7.1.2.2" evidence="1"/>
<dbReference type="EMBL" id="AM942759">
    <property type="protein sequence ID" value="CAR46024.1"/>
    <property type="molecule type" value="Genomic_DNA"/>
</dbReference>
<dbReference type="RefSeq" id="WP_004246589.1">
    <property type="nucleotide sequence ID" value="NC_010554.1"/>
</dbReference>
<dbReference type="SMR" id="B4F0E7"/>
<dbReference type="EnsemblBacteria" id="CAR46024">
    <property type="protein sequence ID" value="CAR46024"/>
    <property type="gene ID" value="PMI3064"/>
</dbReference>
<dbReference type="GeneID" id="6800812"/>
<dbReference type="KEGG" id="pmr:PMI3064"/>
<dbReference type="eggNOG" id="COG0055">
    <property type="taxonomic scope" value="Bacteria"/>
</dbReference>
<dbReference type="HOGENOM" id="CLU_022398_0_2_6"/>
<dbReference type="Proteomes" id="UP000008319">
    <property type="component" value="Chromosome"/>
</dbReference>
<dbReference type="GO" id="GO:0005886">
    <property type="term" value="C:plasma membrane"/>
    <property type="evidence" value="ECO:0007669"/>
    <property type="project" value="UniProtKB-SubCell"/>
</dbReference>
<dbReference type="GO" id="GO:0045259">
    <property type="term" value="C:proton-transporting ATP synthase complex"/>
    <property type="evidence" value="ECO:0007669"/>
    <property type="project" value="UniProtKB-KW"/>
</dbReference>
<dbReference type="GO" id="GO:0005524">
    <property type="term" value="F:ATP binding"/>
    <property type="evidence" value="ECO:0007669"/>
    <property type="project" value="UniProtKB-UniRule"/>
</dbReference>
<dbReference type="GO" id="GO:0016887">
    <property type="term" value="F:ATP hydrolysis activity"/>
    <property type="evidence" value="ECO:0007669"/>
    <property type="project" value="InterPro"/>
</dbReference>
<dbReference type="GO" id="GO:0046933">
    <property type="term" value="F:proton-transporting ATP synthase activity, rotational mechanism"/>
    <property type="evidence" value="ECO:0007669"/>
    <property type="project" value="UniProtKB-UniRule"/>
</dbReference>
<dbReference type="CDD" id="cd18110">
    <property type="entry name" value="ATP-synt_F1_beta_C"/>
    <property type="match status" value="1"/>
</dbReference>
<dbReference type="CDD" id="cd18115">
    <property type="entry name" value="ATP-synt_F1_beta_N"/>
    <property type="match status" value="1"/>
</dbReference>
<dbReference type="CDD" id="cd01133">
    <property type="entry name" value="F1-ATPase_beta_CD"/>
    <property type="match status" value="1"/>
</dbReference>
<dbReference type="FunFam" id="1.10.1140.10:FF:000001">
    <property type="entry name" value="ATP synthase subunit beta"/>
    <property type="match status" value="1"/>
</dbReference>
<dbReference type="FunFam" id="2.40.10.170:FF:000003">
    <property type="entry name" value="ATP synthase subunit beta"/>
    <property type="match status" value="1"/>
</dbReference>
<dbReference type="FunFam" id="3.40.50.300:FF:000004">
    <property type="entry name" value="ATP synthase subunit beta"/>
    <property type="match status" value="1"/>
</dbReference>
<dbReference type="Gene3D" id="2.40.10.170">
    <property type="match status" value="1"/>
</dbReference>
<dbReference type="Gene3D" id="1.10.1140.10">
    <property type="entry name" value="Bovine Mitochondrial F1-atpase, Atp Synthase Beta Chain, Chain D, domain 3"/>
    <property type="match status" value="1"/>
</dbReference>
<dbReference type="Gene3D" id="3.40.50.300">
    <property type="entry name" value="P-loop containing nucleotide triphosphate hydrolases"/>
    <property type="match status" value="1"/>
</dbReference>
<dbReference type="HAMAP" id="MF_01347">
    <property type="entry name" value="ATP_synth_beta_bact"/>
    <property type="match status" value="1"/>
</dbReference>
<dbReference type="InterPro" id="IPR003593">
    <property type="entry name" value="AAA+_ATPase"/>
</dbReference>
<dbReference type="InterPro" id="IPR055190">
    <property type="entry name" value="ATP-synt_VA_C"/>
</dbReference>
<dbReference type="InterPro" id="IPR005722">
    <property type="entry name" value="ATP_synth_F1_bsu"/>
</dbReference>
<dbReference type="InterPro" id="IPR020003">
    <property type="entry name" value="ATPase_a/bsu_AS"/>
</dbReference>
<dbReference type="InterPro" id="IPR050053">
    <property type="entry name" value="ATPase_alpha/beta_chains"/>
</dbReference>
<dbReference type="InterPro" id="IPR004100">
    <property type="entry name" value="ATPase_F1/V1/A1_a/bsu_N"/>
</dbReference>
<dbReference type="InterPro" id="IPR036121">
    <property type="entry name" value="ATPase_F1/V1/A1_a/bsu_N_sf"/>
</dbReference>
<dbReference type="InterPro" id="IPR000194">
    <property type="entry name" value="ATPase_F1/V1/A1_a/bsu_nucl-bd"/>
</dbReference>
<dbReference type="InterPro" id="IPR024034">
    <property type="entry name" value="ATPase_F1/V1_b/a_C"/>
</dbReference>
<dbReference type="InterPro" id="IPR027417">
    <property type="entry name" value="P-loop_NTPase"/>
</dbReference>
<dbReference type="NCBIfam" id="TIGR01039">
    <property type="entry name" value="atpD"/>
    <property type="match status" value="1"/>
</dbReference>
<dbReference type="PANTHER" id="PTHR15184">
    <property type="entry name" value="ATP SYNTHASE"/>
    <property type="match status" value="1"/>
</dbReference>
<dbReference type="PANTHER" id="PTHR15184:SF71">
    <property type="entry name" value="ATP SYNTHASE SUBUNIT BETA, MITOCHONDRIAL"/>
    <property type="match status" value="1"/>
</dbReference>
<dbReference type="Pfam" id="PF00006">
    <property type="entry name" value="ATP-synt_ab"/>
    <property type="match status" value="1"/>
</dbReference>
<dbReference type="Pfam" id="PF02874">
    <property type="entry name" value="ATP-synt_ab_N"/>
    <property type="match status" value="1"/>
</dbReference>
<dbReference type="Pfam" id="PF22919">
    <property type="entry name" value="ATP-synt_VA_C"/>
    <property type="match status" value="1"/>
</dbReference>
<dbReference type="SMART" id="SM00382">
    <property type="entry name" value="AAA"/>
    <property type="match status" value="1"/>
</dbReference>
<dbReference type="SUPFAM" id="SSF47917">
    <property type="entry name" value="C-terminal domain of alpha and beta subunits of F1 ATP synthase"/>
    <property type="match status" value="1"/>
</dbReference>
<dbReference type="SUPFAM" id="SSF50615">
    <property type="entry name" value="N-terminal domain of alpha and beta subunits of F1 ATP synthase"/>
    <property type="match status" value="1"/>
</dbReference>
<dbReference type="SUPFAM" id="SSF52540">
    <property type="entry name" value="P-loop containing nucleoside triphosphate hydrolases"/>
    <property type="match status" value="1"/>
</dbReference>
<dbReference type="PROSITE" id="PS00152">
    <property type="entry name" value="ATPASE_ALPHA_BETA"/>
    <property type="match status" value="1"/>
</dbReference>
<comment type="function">
    <text evidence="1">Produces ATP from ADP in the presence of a proton gradient across the membrane. The catalytic sites are hosted primarily by the beta subunits.</text>
</comment>
<comment type="catalytic activity">
    <reaction evidence="1">
        <text>ATP + H2O + 4 H(+)(in) = ADP + phosphate + 5 H(+)(out)</text>
        <dbReference type="Rhea" id="RHEA:57720"/>
        <dbReference type="ChEBI" id="CHEBI:15377"/>
        <dbReference type="ChEBI" id="CHEBI:15378"/>
        <dbReference type="ChEBI" id="CHEBI:30616"/>
        <dbReference type="ChEBI" id="CHEBI:43474"/>
        <dbReference type="ChEBI" id="CHEBI:456216"/>
        <dbReference type="EC" id="7.1.2.2"/>
    </reaction>
</comment>
<comment type="subunit">
    <text evidence="1">F-type ATPases have 2 components, CF(1) - the catalytic core - and CF(0) - the membrane proton channel. CF(1) has five subunits: alpha(3), beta(3), gamma(1), delta(1), epsilon(1). CF(0) has three main subunits: a(1), b(2) and c(9-12). The alpha and beta chains form an alternating ring which encloses part of the gamma chain. CF(1) is attached to CF(0) by a central stalk formed by the gamma and epsilon chains, while a peripheral stalk is formed by the delta and b chains.</text>
</comment>
<comment type="subcellular location">
    <subcellularLocation>
        <location evidence="1">Cell inner membrane</location>
        <topology evidence="1">Peripheral membrane protein</topology>
    </subcellularLocation>
</comment>
<comment type="similarity">
    <text evidence="1">Belongs to the ATPase alpha/beta chains family.</text>
</comment>
<feature type="chain" id="PRO_1000143532" description="ATP synthase subunit beta">
    <location>
        <begin position="1"/>
        <end position="460"/>
    </location>
</feature>
<feature type="binding site" evidence="1">
    <location>
        <begin position="150"/>
        <end position="157"/>
    </location>
    <ligand>
        <name>ATP</name>
        <dbReference type="ChEBI" id="CHEBI:30616"/>
    </ligand>
</feature>
<name>ATPB_PROMH</name>
<gene>
    <name evidence="1" type="primary">atpD</name>
    <name type="ordered locus">PMI3064</name>
</gene>
<protein>
    <recommendedName>
        <fullName evidence="1">ATP synthase subunit beta</fullName>
        <ecNumber evidence="1">7.1.2.2</ecNumber>
    </recommendedName>
    <alternativeName>
        <fullName evidence="1">ATP synthase F1 sector subunit beta</fullName>
    </alternativeName>
    <alternativeName>
        <fullName evidence="1">F-ATPase subunit beta</fullName>
    </alternativeName>
</protein>
<keyword id="KW-0066">ATP synthesis</keyword>
<keyword id="KW-0067">ATP-binding</keyword>
<keyword id="KW-0997">Cell inner membrane</keyword>
<keyword id="KW-1003">Cell membrane</keyword>
<keyword id="KW-0139">CF(1)</keyword>
<keyword id="KW-0375">Hydrogen ion transport</keyword>
<keyword id="KW-0406">Ion transport</keyword>
<keyword id="KW-0472">Membrane</keyword>
<keyword id="KW-0547">Nucleotide-binding</keyword>
<keyword id="KW-1185">Reference proteome</keyword>
<keyword id="KW-1278">Translocase</keyword>
<keyword id="KW-0813">Transport</keyword>
<accession>B4F0E7</accession>